<keyword id="KW-0066">ATP synthesis</keyword>
<keyword id="KW-0067">ATP-binding</keyword>
<keyword id="KW-1003">Cell membrane</keyword>
<keyword id="KW-0139">CF(1)</keyword>
<keyword id="KW-0375">Hydrogen ion transport</keyword>
<keyword id="KW-0406">Ion transport</keyword>
<keyword id="KW-0472">Membrane</keyword>
<keyword id="KW-0547">Nucleotide-binding</keyword>
<keyword id="KW-1185">Reference proteome</keyword>
<keyword id="KW-1278">Translocase</keyword>
<keyword id="KW-0813">Transport</keyword>
<name>ATPB_ALKMQ</name>
<sequence length="464" mass="50088">MATGNVGKLVQIIGAVVDIRFSSEEIPALLSAITIQGPDGLVTVEVAQHIGDDTARCVAMRSTDGLVRGMEAIDTGAPITVPVGRETLGRIFNVLGEVVDEGKPVEAKMHLPIHREAPSFEEQEAATEIFETGIKVVDLIAPYARGGKVGLFGGAGVGKTVLIMELINNIAKEHGGLSVFAGVGERTREGNDLYHEMIESGVIDKTSLVYGQMNEPPGARMRVGLTGLTMAEYFRDQEGQDVLLFIDNIFRFTQAGSEVSALLGRMPSAVGYQPTLATEMGALQERITSTKKGSITSVQAVYVPADDLTDPAPATTFAHLDATTVLSRQISELGIYPAVDPLDSNSRILDPATVGQEHYEVARGVQEVLQRYKELQDIIAILGMDELSDEDKLTVARARRVQRFLSQPFFVAEQFTGMAGKYVPLKETIRGFKEILDGKHDDLPESAFLFVGSIDEAVEKANKG</sequence>
<comment type="function">
    <text evidence="1">Produces ATP from ADP in the presence of a proton gradient across the membrane. The catalytic sites are hosted primarily by the beta subunits.</text>
</comment>
<comment type="catalytic activity">
    <reaction evidence="1">
        <text>ATP + H2O + 4 H(+)(in) = ADP + phosphate + 5 H(+)(out)</text>
        <dbReference type="Rhea" id="RHEA:57720"/>
        <dbReference type="ChEBI" id="CHEBI:15377"/>
        <dbReference type="ChEBI" id="CHEBI:15378"/>
        <dbReference type="ChEBI" id="CHEBI:30616"/>
        <dbReference type="ChEBI" id="CHEBI:43474"/>
        <dbReference type="ChEBI" id="CHEBI:456216"/>
        <dbReference type="EC" id="7.1.2.2"/>
    </reaction>
</comment>
<comment type="subunit">
    <text evidence="1">F-type ATPases have 2 components, CF(1) - the catalytic core - and CF(0) - the membrane proton channel. CF(1) has five subunits: alpha(3), beta(3), gamma(1), delta(1), epsilon(1). CF(0) has three main subunits: a(1), b(2) and c(9-12). The alpha and beta chains form an alternating ring which encloses part of the gamma chain. CF(1) is attached to CF(0) by a central stalk formed by the gamma and epsilon chains, while a peripheral stalk is formed by the delta and b chains.</text>
</comment>
<comment type="subcellular location">
    <subcellularLocation>
        <location evidence="1">Cell membrane</location>
        <topology evidence="1">Peripheral membrane protein</topology>
    </subcellularLocation>
</comment>
<comment type="similarity">
    <text evidence="1">Belongs to the ATPase alpha/beta chains family.</text>
</comment>
<proteinExistence type="inferred from homology"/>
<protein>
    <recommendedName>
        <fullName evidence="1">ATP synthase subunit beta</fullName>
        <ecNumber evidence="1">7.1.2.2</ecNumber>
    </recommendedName>
    <alternativeName>
        <fullName evidence="1">ATP synthase F1 sector subunit beta</fullName>
    </alternativeName>
    <alternativeName>
        <fullName evidence="1">F-ATPase subunit beta</fullName>
    </alternativeName>
</protein>
<accession>A6TK65</accession>
<dbReference type="EC" id="7.1.2.2" evidence="1"/>
<dbReference type="EMBL" id="CP000724">
    <property type="protein sequence ID" value="ABR46583.1"/>
    <property type="molecule type" value="Genomic_DNA"/>
</dbReference>
<dbReference type="RefSeq" id="WP_011971491.1">
    <property type="nucleotide sequence ID" value="NC_009633.1"/>
</dbReference>
<dbReference type="SMR" id="A6TK65"/>
<dbReference type="STRING" id="293826.Amet_0353"/>
<dbReference type="KEGG" id="amt:Amet_0353"/>
<dbReference type="eggNOG" id="COG0055">
    <property type="taxonomic scope" value="Bacteria"/>
</dbReference>
<dbReference type="HOGENOM" id="CLU_022398_0_2_9"/>
<dbReference type="OrthoDB" id="9801639at2"/>
<dbReference type="Proteomes" id="UP000001572">
    <property type="component" value="Chromosome"/>
</dbReference>
<dbReference type="GO" id="GO:0005886">
    <property type="term" value="C:plasma membrane"/>
    <property type="evidence" value="ECO:0007669"/>
    <property type="project" value="UniProtKB-SubCell"/>
</dbReference>
<dbReference type="GO" id="GO:0045259">
    <property type="term" value="C:proton-transporting ATP synthase complex"/>
    <property type="evidence" value="ECO:0007669"/>
    <property type="project" value="UniProtKB-KW"/>
</dbReference>
<dbReference type="GO" id="GO:0005524">
    <property type="term" value="F:ATP binding"/>
    <property type="evidence" value="ECO:0007669"/>
    <property type="project" value="UniProtKB-UniRule"/>
</dbReference>
<dbReference type="GO" id="GO:0016887">
    <property type="term" value="F:ATP hydrolysis activity"/>
    <property type="evidence" value="ECO:0007669"/>
    <property type="project" value="InterPro"/>
</dbReference>
<dbReference type="GO" id="GO:0046933">
    <property type="term" value="F:proton-transporting ATP synthase activity, rotational mechanism"/>
    <property type="evidence" value="ECO:0007669"/>
    <property type="project" value="UniProtKB-UniRule"/>
</dbReference>
<dbReference type="CDD" id="cd18110">
    <property type="entry name" value="ATP-synt_F1_beta_C"/>
    <property type="match status" value="1"/>
</dbReference>
<dbReference type="CDD" id="cd18115">
    <property type="entry name" value="ATP-synt_F1_beta_N"/>
    <property type="match status" value="1"/>
</dbReference>
<dbReference type="CDD" id="cd01133">
    <property type="entry name" value="F1-ATPase_beta_CD"/>
    <property type="match status" value="1"/>
</dbReference>
<dbReference type="FunFam" id="1.10.1140.10:FF:000001">
    <property type="entry name" value="ATP synthase subunit beta"/>
    <property type="match status" value="1"/>
</dbReference>
<dbReference type="FunFam" id="3.40.50.300:FF:000026">
    <property type="entry name" value="ATP synthase subunit beta"/>
    <property type="match status" value="1"/>
</dbReference>
<dbReference type="Gene3D" id="2.40.10.170">
    <property type="match status" value="1"/>
</dbReference>
<dbReference type="Gene3D" id="1.10.1140.10">
    <property type="entry name" value="Bovine Mitochondrial F1-atpase, Atp Synthase Beta Chain, Chain D, domain 3"/>
    <property type="match status" value="1"/>
</dbReference>
<dbReference type="Gene3D" id="3.40.50.300">
    <property type="entry name" value="P-loop containing nucleotide triphosphate hydrolases"/>
    <property type="match status" value="1"/>
</dbReference>
<dbReference type="HAMAP" id="MF_01347">
    <property type="entry name" value="ATP_synth_beta_bact"/>
    <property type="match status" value="1"/>
</dbReference>
<dbReference type="InterPro" id="IPR003593">
    <property type="entry name" value="AAA+_ATPase"/>
</dbReference>
<dbReference type="InterPro" id="IPR055190">
    <property type="entry name" value="ATP-synt_VA_C"/>
</dbReference>
<dbReference type="InterPro" id="IPR005722">
    <property type="entry name" value="ATP_synth_F1_bsu"/>
</dbReference>
<dbReference type="InterPro" id="IPR020003">
    <property type="entry name" value="ATPase_a/bsu_AS"/>
</dbReference>
<dbReference type="InterPro" id="IPR050053">
    <property type="entry name" value="ATPase_alpha/beta_chains"/>
</dbReference>
<dbReference type="InterPro" id="IPR004100">
    <property type="entry name" value="ATPase_F1/V1/A1_a/bsu_N"/>
</dbReference>
<dbReference type="InterPro" id="IPR036121">
    <property type="entry name" value="ATPase_F1/V1/A1_a/bsu_N_sf"/>
</dbReference>
<dbReference type="InterPro" id="IPR000194">
    <property type="entry name" value="ATPase_F1/V1/A1_a/bsu_nucl-bd"/>
</dbReference>
<dbReference type="InterPro" id="IPR024034">
    <property type="entry name" value="ATPase_F1/V1_b/a_C"/>
</dbReference>
<dbReference type="InterPro" id="IPR027417">
    <property type="entry name" value="P-loop_NTPase"/>
</dbReference>
<dbReference type="NCBIfam" id="TIGR01039">
    <property type="entry name" value="atpD"/>
    <property type="match status" value="1"/>
</dbReference>
<dbReference type="PANTHER" id="PTHR15184">
    <property type="entry name" value="ATP SYNTHASE"/>
    <property type="match status" value="1"/>
</dbReference>
<dbReference type="PANTHER" id="PTHR15184:SF71">
    <property type="entry name" value="ATP SYNTHASE SUBUNIT BETA, MITOCHONDRIAL"/>
    <property type="match status" value="1"/>
</dbReference>
<dbReference type="Pfam" id="PF00006">
    <property type="entry name" value="ATP-synt_ab"/>
    <property type="match status" value="1"/>
</dbReference>
<dbReference type="Pfam" id="PF02874">
    <property type="entry name" value="ATP-synt_ab_N"/>
    <property type="match status" value="1"/>
</dbReference>
<dbReference type="Pfam" id="PF22919">
    <property type="entry name" value="ATP-synt_VA_C"/>
    <property type="match status" value="1"/>
</dbReference>
<dbReference type="PIRSF" id="PIRSF039072">
    <property type="entry name" value="ATPase_subunit_beta"/>
    <property type="match status" value="1"/>
</dbReference>
<dbReference type="SMART" id="SM00382">
    <property type="entry name" value="AAA"/>
    <property type="match status" value="1"/>
</dbReference>
<dbReference type="SUPFAM" id="SSF47917">
    <property type="entry name" value="C-terminal domain of alpha and beta subunits of F1 ATP synthase"/>
    <property type="match status" value="1"/>
</dbReference>
<dbReference type="SUPFAM" id="SSF50615">
    <property type="entry name" value="N-terminal domain of alpha and beta subunits of F1 ATP synthase"/>
    <property type="match status" value="1"/>
</dbReference>
<dbReference type="SUPFAM" id="SSF52540">
    <property type="entry name" value="P-loop containing nucleoside triphosphate hydrolases"/>
    <property type="match status" value="1"/>
</dbReference>
<dbReference type="PROSITE" id="PS00152">
    <property type="entry name" value="ATPASE_ALPHA_BETA"/>
    <property type="match status" value="1"/>
</dbReference>
<evidence type="ECO:0000255" key="1">
    <source>
        <dbReference type="HAMAP-Rule" id="MF_01347"/>
    </source>
</evidence>
<reference key="1">
    <citation type="journal article" date="2016" name="Genome Announc.">
        <title>Complete genome sequence of Alkaliphilus metalliredigens strain QYMF, an alkaliphilic and metal-reducing bacterium isolated from borax-contaminated leachate ponds.</title>
        <authorList>
            <person name="Hwang C."/>
            <person name="Copeland A."/>
            <person name="Lucas S."/>
            <person name="Lapidus A."/>
            <person name="Barry K."/>
            <person name="Detter J.C."/>
            <person name="Glavina Del Rio T."/>
            <person name="Hammon N."/>
            <person name="Israni S."/>
            <person name="Dalin E."/>
            <person name="Tice H."/>
            <person name="Pitluck S."/>
            <person name="Chertkov O."/>
            <person name="Brettin T."/>
            <person name="Bruce D."/>
            <person name="Han C."/>
            <person name="Schmutz J."/>
            <person name="Larimer F."/>
            <person name="Land M.L."/>
            <person name="Hauser L."/>
            <person name="Kyrpides N."/>
            <person name="Mikhailova N."/>
            <person name="Ye Q."/>
            <person name="Zhou J."/>
            <person name="Richardson P."/>
            <person name="Fields M.W."/>
        </authorList>
    </citation>
    <scope>NUCLEOTIDE SEQUENCE [LARGE SCALE GENOMIC DNA]</scope>
    <source>
        <strain>QYMF</strain>
    </source>
</reference>
<organism>
    <name type="scientific">Alkaliphilus metalliredigens (strain QYMF)</name>
    <dbReference type="NCBI Taxonomy" id="293826"/>
    <lineage>
        <taxon>Bacteria</taxon>
        <taxon>Bacillati</taxon>
        <taxon>Bacillota</taxon>
        <taxon>Clostridia</taxon>
        <taxon>Peptostreptococcales</taxon>
        <taxon>Natronincolaceae</taxon>
        <taxon>Alkaliphilus</taxon>
    </lineage>
</organism>
<gene>
    <name evidence="1" type="primary">atpD</name>
    <name type="ordered locus">Amet_0353</name>
</gene>
<feature type="chain" id="PRO_1000073362" description="ATP synthase subunit beta">
    <location>
        <begin position="1"/>
        <end position="464"/>
    </location>
</feature>
<feature type="binding site" evidence="1">
    <location>
        <begin position="153"/>
        <end position="160"/>
    </location>
    <ligand>
        <name>ATP</name>
        <dbReference type="ChEBI" id="CHEBI:30616"/>
    </ligand>
</feature>